<protein>
    <recommendedName>
        <fullName evidence="1">Ribonuclease P protein component</fullName>
        <shortName evidence="1">RNase P protein</shortName>
        <shortName evidence="1">RNaseP protein</shortName>
        <ecNumber evidence="1">3.1.26.5</ecNumber>
    </recommendedName>
    <alternativeName>
        <fullName evidence="1">Protein C5</fullName>
    </alternativeName>
</protein>
<comment type="function">
    <text evidence="1">RNaseP catalyzes the removal of the 5'-leader sequence from pre-tRNA to produce the mature 5'-terminus. It can also cleave other RNA substrates such as 4.5S RNA. The protein component plays an auxiliary but essential role in vivo by binding to the 5'-leader sequence and broadening the substrate specificity of the ribozyme.</text>
</comment>
<comment type="catalytic activity">
    <reaction evidence="1">
        <text>Endonucleolytic cleavage of RNA, removing 5'-extranucleotides from tRNA precursor.</text>
        <dbReference type="EC" id="3.1.26.5"/>
    </reaction>
</comment>
<comment type="subunit">
    <text evidence="1">Consists of a catalytic RNA component (M1 or rnpB) and a protein subunit.</text>
</comment>
<comment type="similarity">
    <text evidence="1">Belongs to the RnpA family.</text>
</comment>
<feature type="chain" id="PRO_1000058754" description="Ribonuclease P protein component">
    <location>
        <begin position="1"/>
        <end position="119"/>
    </location>
</feature>
<gene>
    <name evidence="1" type="primary">rnpA</name>
    <name type="ordered locus">Spro_0030</name>
</gene>
<keyword id="KW-0255">Endonuclease</keyword>
<keyword id="KW-0378">Hydrolase</keyword>
<keyword id="KW-0540">Nuclease</keyword>
<keyword id="KW-0694">RNA-binding</keyword>
<keyword id="KW-0819">tRNA processing</keyword>
<evidence type="ECO:0000255" key="1">
    <source>
        <dbReference type="HAMAP-Rule" id="MF_00227"/>
    </source>
</evidence>
<organism>
    <name type="scientific">Serratia proteamaculans (strain 568)</name>
    <dbReference type="NCBI Taxonomy" id="399741"/>
    <lineage>
        <taxon>Bacteria</taxon>
        <taxon>Pseudomonadati</taxon>
        <taxon>Pseudomonadota</taxon>
        <taxon>Gammaproteobacteria</taxon>
        <taxon>Enterobacterales</taxon>
        <taxon>Yersiniaceae</taxon>
        <taxon>Serratia</taxon>
    </lineage>
</organism>
<name>RNPA_SERP5</name>
<sequence>MVKLAFPRELRLLTPTHFTFVFQQPQRAGTPQITILGRLNQLGHPRIGLTVAKKHVKRAHERNRIKRLTRESFRLRQHELPAMDFVVVAKKGIADLDNRALTEALEKLWRRHCRQAPAS</sequence>
<accession>A8G7Q0</accession>
<dbReference type="EC" id="3.1.26.5" evidence="1"/>
<dbReference type="EMBL" id="CP000826">
    <property type="protein sequence ID" value="ABV39140.1"/>
    <property type="molecule type" value="Genomic_DNA"/>
</dbReference>
<dbReference type="SMR" id="A8G7Q0"/>
<dbReference type="STRING" id="399741.Spro_0030"/>
<dbReference type="KEGG" id="spe:Spro_0030"/>
<dbReference type="eggNOG" id="COG0594">
    <property type="taxonomic scope" value="Bacteria"/>
</dbReference>
<dbReference type="HOGENOM" id="CLU_117179_11_0_6"/>
<dbReference type="OrthoDB" id="9796422at2"/>
<dbReference type="GO" id="GO:0030677">
    <property type="term" value="C:ribonuclease P complex"/>
    <property type="evidence" value="ECO:0007669"/>
    <property type="project" value="TreeGrafter"/>
</dbReference>
<dbReference type="GO" id="GO:0042781">
    <property type="term" value="F:3'-tRNA processing endoribonuclease activity"/>
    <property type="evidence" value="ECO:0007669"/>
    <property type="project" value="TreeGrafter"/>
</dbReference>
<dbReference type="GO" id="GO:0004526">
    <property type="term" value="F:ribonuclease P activity"/>
    <property type="evidence" value="ECO:0007669"/>
    <property type="project" value="UniProtKB-UniRule"/>
</dbReference>
<dbReference type="GO" id="GO:0000049">
    <property type="term" value="F:tRNA binding"/>
    <property type="evidence" value="ECO:0007669"/>
    <property type="project" value="UniProtKB-UniRule"/>
</dbReference>
<dbReference type="GO" id="GO:0001682">
    <property type="term" value="P:tRNA 5'-leader removal"/>
    <property type="evidence" value="ECO:0007669"/>
    <property type="project" value="UniProtKB-UniRule"/>
</dbReference>
<dbReference type="FunFam" id="3.30.230.10:FF:000016">
    <property type="entry name" value="Ribonuclease P protein component"/>
    <property type="match status" value="1"/>
</dbReference>
<dbReference type="Gene3D" id="3.30.230.10">
    <property type="match status" value="1"/>
</dbReference>
<dbReference type="HAMAP" id="MF_00227">
    <property type="entry name" value="RNase_P"/>
    <property type="match status" value="1"/>
</dbReference>
<dbReference type="InterPro" id="IPR020568">
    <property type="entry name" value="Ribosomal_Su5_D2-typ_SF"/>
</dbReference>
<dbReference type="InterPro" id="IPR014721">
    <property type="entry name" value="Ribsml_uS5_D2-typ_fold_subgr"/>
</dbReference>
<dbReference type="InterPro" id="IPR000100">
    <property type="entry name" value="RNase_P"/>
</dbReference>
<dbReference type="InterPro" id="IPR020539">
    <property type="entry name" value="RNase_P_CS"/>
</dbReference>
<dbReference type="NCBIfam" id="TIGR00188">
    <property type="entry name" value="rnpA"/>
    <property type="match status" value="1"/>
</dbReference>
<dbReference type="PANTHER" id="PTHR33992">
    <property type="entry name" value="RIBONUCLEASE P PROTEIN COMPONENT"/>
    <property type="match status" value="1"/>
</dbReference>
<dbReference type="PANTHER" id="PTHR33992:SF1">
    <property type="entry name" value="RIBONUCLEASE P PROTEIN COMPONENT"/>
    <property type="match status" value="1"/>
</dbReference>
<dbReference type="Pfam" id="PF00825">
    <property type="entry name" value="Ribonuclease_P"/>
    <property type="match status" value="1"/>
</dbReference>
<dbReference type="SUPFAM" id="SSF54211">
    <property type="entry name" value="Ribosomal protein S5 domain 2-like"/>
    <property type="match status" value="1"/>
</dbReference>
<dbReference type="PROSITE" id="PS00648">
    <property type="entry name" value="RIBONUCLEASE_P"/>
    <property type="match status" value="1"/>
</dbReference>
<proteinExistence type="inferred from homology"/>
<reference key="1">
    <citation type="submission" date="2007-09" db="EMBL/GenBank/DDBJ databases">
        <title>Complete sequence of chromosome of Serratia proteamaculans 568.</title>
        <authorList>
            <consortium name="US DOE Joint Genome Institute"/>
            <person name="Copeland A."/>
            <person name="Lucas S."/>
            <person name="Lapidus A."/>
            <person name="Barry K."/>
            <person name="Glavina del Rio T."/>
            <person name="Dalin E."/>
            <person name="Tice H."/>
            <person name="Pitluck S."/>
            <person name="Chain P."/>
            <person name="Malfatti S."/>
            <person name="Shin M."/>
            <person name="Vergez L."/>
            <person name="Schmutz J."/>
            <person name="Larimer F."/>
            <person name="Land M."/>
            <person name="Hauser L."/>
            <person name="Kyrpides N."/>
            <person name="Kim E."/>
            <person name="Taghavi S."/>
            <person name="Newman L."/>
            <person name="Vangronsveld J."/>
            <person name="van der Lelie D."/>
            <person name="Richardson P."/>
        </authorList>
    </citation>
    <scope>NUCLEOTIDE SEQUENCE [LARGE SCALE GENOMIC DNA]</scope>
    <source>
        <strain>568</strain>
    </source>
</reference>